<feature type="chain" id="PRO_0000256230" description="Adenine deaminase">
    <location>
        <begin position="1"/>
        <end position="354"/>
    </location>
</feature>
<feature type="active site" description="Proton donor" evidence="1">
    <location>
        <position position="214"/>
    </location>
</feature>
<feature type="binding site" evidence="1">
    <location>
        <position position="19"/>
    </location>
    <ligand>
        <name>Zn(2+)</name>
        <dbReference type="ChEBI" id="CHEBI:29105"/>
        <note>catalytic</note>
    </ligand>
</feature>
<feature type="binding site" evidence="1">
    <location>
        <position position="21"/>
    </location>
    <ligand>
        <name>Zn(2+)</name>
        <dbReference type="ChEBI" id="CHEBI:29105"/>
        <note>catalytic</note>
    </ligand>
</feature>
<feature type="binding site" evidence="1">
    <location>
        <position position="211"/>
    </location>
    <ligand>
        <name>Zn(2+)</name>
        <dbReference type="ChEBI" id="CHEBI:29105"/>
        <note>catalytic</note>
    </ligand>
</feature>
<feature type="binding site" evidence="1">
    <location>
        <position position="291"/>
    </location>
    <ligand>
        <name>Zn(2+)</name>
        <dbReference type="ChEBI" id="CHEBI:29105"/>
        <note>catalytic</note>
    </ligand>
</feature>
<feature type="binding site" evidence="1">
    <location>
        <position position="292"/>
    </location>
    <ligand>
        <name>substrate</name>
    </ligand>
</feature>
<feature type="site" description="Important for catalytic activity" evidence="1">
    <location>
        <position position="234"/>
    </location>
</feature>
<reference key="1">
    <citation type="journal article" date="2005" name="Nature">
        <title>Genomic sequence of the pathogenic and allergenic filamentous fungus Aspergillus fumigatus.</title>
        <authorList>
            <person name="Nierman W.C."/>
            <person name="Pain A."/>
            <person name="Anderson M.J."/>
            <person name="Wortman J.R."/>
            <person name="Kim H.S."/>
            <person name="Arroyo J."/>
            <person name="Berriman M."/>
            <person name="Abe K."/>
            <person name="Archer D.B."/>
            <person name="Bermejo C."/>
            <person name="Bennett J.W."/>
            <person name="Bowyer P."/>
            <person name="Chen D."/>
            <person name="Collins M."/>
            <person name="Coulsen R."/>
            <person name="Davies R."/>
            <person name="Dyer P.S."/>
            <person name="Farman M.L."/>
            <person name="Fedorova N."/>
            <person name="Fedorova N.D."/>
            <person name="Feldblyum T.V."/>
            <person name="Fischer R."/>
            <person name="Fosker N."/>
            <person name="Fraser A."/>
            <person name="Garcia J.L."/>
            <person name="Garcia M.J."/>
            <person name="Goble A."/>
            <person name="Goldman G.H."/>
            <person name="Gomi K."/>
            <person name="Griffith-Jones S."/>
            <person name="Gwilliam R."/>
            <person name="Haas B.J."/>
            <person name="Haas H."/>
            <person name="Harris D.E."/>
            <person name="Horiuchi H."/>
            <person name="Huang J."/>
            <person name="Humphray S."/>
            <person name="Jimenez J."/>
            <person name="Keller N."/>
            <person name="Khouri H."/>
            <person name="Kitamoto K."/>
            <person name="Kobayashi T."/>
            <person name="Konzack S."/>
            <person name="Kulkarni R."/>
            <person name="Kumagai T."/>
            <person name="Lafton A."/>
            <person name="Latge J.-P."/>
            <person name="Li W."/>
            <person name="Lord A."/>
            <person name="Lu C."/>
            <person name="Majoros W.H."/>
            <person name="May G.S."/>
            <person name="Miller B.L."/>
            <person name="Mohamoud Y."/>
            <person name="Molina M."/>
            <person name="Monod M."/>
            <person name="Mouyna I."/>
            <person name="Mulligan S."/>
            <person name="Murphy L.D."/>
            <person name="O'Neil S."/>
            <person name="Paulsen I."/>
            <person name="Penalva M.A."/>
            <person name="Pertea M."/>
            <person name="Price C."/>
            <person name="Pritchard B.L."/>
            <person name="Quail M.A."/>
            <person name="Rabbinowitsch E."/>
            <person name="Rawlins N."/>
            <person name="Rajandream M.A."/>
            <person name="Reichard U."/>
            <person name="Renauld H."/>
            <person name="Robson G.D."/>
            <person name="Rodriguez de Cordoba S."/>
            <person name="Rodriguez-Pena J.M."/>
            <person name="Ronning C.M."/>
            <person name="Rutter S."/>
            <person name="Salzberg S.L."/>
            <person name="Sanchez M."/>
            <person name="Sanchez-Ferrero J.C."/>
            <person name="Saunders D."/>
            <person name="Seeger K."/>
            <person name="Squares R."/>
            <person name="Squares S."/>
            <person name="Takeuchi M."/>
            <person name="Tekaia F."/>
            <person name="Turner G."/>
            <person name="Vazquez de Aldana C.R."/>
            <person name="Weidman J."/>
            <person name="White O."/>
            <person name="Woodward J.R."/>
            <person name="Yu J.-H."/>
            <person name="Fraser C.M."/>
            <person name="Galagan J.E."/>
            <person name="Asai K."/>
            <person name="Machida M."/>
            <person name="Hall N."/>
            <person name="Barrell B.G."/>
            <person name="Denning D.W."/>
        </authorList>
    </citation>
    <scope>NUCLEOTIDE SEQUENCE [LARGE SCALE GENOMIC DNA]</scope>
    <source>
        <strain>ATCC MYA-4609 / CBS 101355 / FGSC A1100 / Af293</strain>
    </source>
</reference>
<gene>
    <name type="primary">aah1</name>
    <name type="ORF">AFUA_2G09150</name>
</gene>
<comment type="function">
    <text evidence="1">Catalyzes the hydrolytic deamination of adenine to hypoxanthine. Plays an important role in the purine salvage pathway and in nitrogen catabolism.</text>
</comment>
<comment type="catalytic activity">
    <reaction evidence="1">
        <text>adenine + H2O + H(+) = hypoxanthine + NH4(+)</text>
        <dbReference type="Rhea" id="RHEA:23688"/>
        <dbReference type="ChEBI" id="CHEBI:15377"/>
        <dbReference type="ChEBI" id="CHEBI:15378"/>
        <dbReference type="ChEBI" id="CHEBI:16708"/>
        <dbReference type="ChEBI" id="CHEBI:17368"/>
        <dbReference type="ChEBI" id="CHEBI:28938"/>
        <dbReference type="EC" id="3.5.4.2"/>
    </reaction>
</comment>
<comment type="cofactor">
    <cofactor evidence="1">
        <name>Zn(2+)</name>
        <dbReference type="ChEBI" id="CHEBI:29105"/>
    </cofactor>
    <text evidence="1">Binds 1 zinc ion per subunit.</text>
</comment>
<comment type="subcellular location">
    <subcellularLocation>
        <location evidence="1">Cytoplasm</location>
    </subcellularLocation>
    <subcellularLocation>
        <location evidence="1">Nucleus</location>
    </subcellularLocation>
</comment>
<comment type="similarity">
    <text evidence="1">Belongs to the metallo-dependent hydrolases superfamily. Adenosine and AMP deaminases family. Adenine deaminase type 2 subfamily.</text>
</comment>
<accession>Q4X1Q4</accession>
<proteinExistence type="inferred from homology"/>
<keyword id="KW-0963">Cytoplasm</keyword>
<keyword id="KW-0378">Hydrolase</keyword>
<keyword id="KW-0479">Metal-binding</keyword>
<keyword id="KW-0546">Nucleotide metabolism</keyword>
<keyword id="KW-0539">Nucleus</keyword>
<keyword id="KW-1185">Reference proteome</keyword>
<keyword id="KW-0862">Zinc</keyword>
<dbReference type="EC" id="3.5.4.2" evidence="1"/>
<dbReference type="EMBL" id="AAHF01000001">
    <property type="protein sequence ID" value="EAL93211.1"/>
    <property type="molecule type" value="Genomic_DNA"/>
</dbReference>
<dbReference type="RefSeq" id="XP_755249.1">
    <property type="nucleotide sequence ID" value="XM_750156.1"/>
</dbReference>
<dbReference type="SMR" id="Q4X1Q4"/>
<dbReference type="FunCoup" id="Q4X1Q4">
    <property type="interactions" value="607"/>
</dbReference>
<dbReference type="STRING" id="330879.Q4X1Q4"/>
<dbReference type="EnsemblFungi" id="EAL93211">
    <property type="protein sequence ID" value="EAL93211"/>
    <property type="gene ID" value="AFUA_2G09150"/>
</dbReference>
<dbReference type="GeneID" id="3513729"/>
<dbReference type="KEGG" id="afm:AFUA_2G09150"/>
<dbReference type="VEuPathDB" id="FungiDB:Afu2g09150"/>
<dbReference type="eggNOG" id="KOG1097">
    <property type="taxonomic scope" value="Eukaryota"/>
</dbReference>
<dbReference type="HOGENOM" id="CLU_039228_7_0_1"/>
<dbReference type="InParanoid" id="Q4X1Q4"/>
<dbReference type="OMA" id="NHFTIHA"/>
<dbReference type="OrthoDB" id="272271at2759"/>
<dbReference type="Proteomes" id="UP000002530">
    <property type="component" value="Chromosome 2"/>
</dbReference>
<dbReference type="GO" id="GO:0005737">
    <property type="term" value="C:cytoplasm"/>
    <property type="evidence" value="ECO:0007669"/>
    <property type="project" value="UniProtKB-SubCell"/>
</dbReference>
<dbReference type="GO" id="GO:0005634">
    <property type="term" value="C:nucleus"/>
    <property type="evidence" value="ECO:0007669"/>
    <property type="project" value="UniProtKB-SubCell"/>
</dbReference>
<dbReference type="GO" id="GO:0000034">
    <property type="term" value="F:adenine deaminase activity"/>
    <property type="evidence" value="ECO:0000318"/>
    <property type="project" value="GO_Central"/>
</dbReference>
<dbReference type="GO" id="GO:0008270">
    <property type="term" value="F:zinc ion binding"/>
    <property type="evidence" value="ECO:0007669"/>
    <property type="project" value="UniProtKB-UniRule"/>
</dbReference>
<dbReference type="GO" id="GO:0006146">
    <property type="term" value="P:adenine catabolic process"/>
    <property type="evidence" value="ECO:0000318"/>
    <property type="project" value="GO_Central"/>
</dbReference>
<dbReference type="GO" id="GO:0043103">
    <property type="term" value="P:hypoxanthine salvage"/>
    <property type="evidence" value="ECO:0000318"/>
    <property type="project" value="GO_Central"/>
</dbReference>
<dbReference type="GO" id="GO:0009117">
    <property type="term" value="P:nucleotide metabolic process"/>
    <property type="evidence" value="ECO:0007669"/>
    <property type="project" value="UniProtKB-KW"/>
</dbReference>
<dbReference type="GO" id="GO:0009168">
    <property type="term" value="P:purine ribonucleoside monophosphate biosynthetic process"/>
    <property type="evidence" value="ECO:0007669"/>
    <property type="project" value="InterPro"/>
</dbReference>
<dbReference type="CDD" id="cd01320">
    <property type="entry name" value="ADA"/>
    <property type="match status" value="1"/>
</dbReference>
<dbReference type="FunFam" id="3.20.20.140:FF:000039">
    <property type="entry name" value="Adenine deaminase"/>
    <property type="match status" value="1"/>
</dbReference>
<dbReference type="Gene3D" id="3.20.20.140">
    <property type="entry name" value="Metal-dependent hydrolases"/>
    <property type="match status" value="1"/>
</dbReference>
<dbReference type="HAMAP" id="MF_01962">
    <property type="entry name" value="Adenine_deaminase"/>
    <property type="match status" value="1"/>
</dbReference>
<dbReference type="InterPro" id="IPR006650">
    <property type="entry name" value="A/AMP_deam_AS"/>
</dbReference>
<dbReference type="InterPro" id="IPR001365">
    <property type="entry name" value="A_deaminase_dom"/>
</dbReference>
<dbReference type="InterPro" id="IPR028892">
    <property type="entry name" value="ADE"/>
</dbReference>
<dbReference type="InterPro" id="IPR006330">
    <property type="entry name" value="Ado/ade_deaminase"/>
</dbReference>
<dbReference type="InterPro" id="IPR032466">
    <property type="entry name" value="Metal_Hydrolase"/>
</dbReference>
<dbReference type="NCBIfam" id="TIGR01430">
    <property type="entry name" value="aden_deam"/>
    <property type="match status" value="1"/>
</dbReference>
<dbReference type="PANTHER" id="PTHR43114">
    <property type="entry name" value="ADENINE DEAMINASE"/>
    <property type="match status" value="1"/>
</dbReference>
<dbReference type="PANTHER" id="PTHR43114:SF6">
    <property type="entry name" value="ADENINE DEAMINASE"/>
    <property type="match status" value="1"/>
</dbReference>
<dbReference type="Pfam" id="PF00962">
    <property type="entry name" value="A_deaminase"/>
    <property type="match status" value="1"/>
</dbReference>
<dbReference type="SUPFAM" id="SSF51556">
    <property type="entry name" value="Metallo-dependent hydrolases"/>
    <property type="match status" value="1"/>
</dbReference>
<dbReference type="PROSITE" id="PS00485">
    <property type="entry name" value="A_DEAMINASE"/>
    <property type="match status" value="1"/>
</dbReference>
<protein>
    <recommendedName>
        <fullName evidence="1">Adenine deaminase</fullName>
        <shortName evidence="1">ADE</shortName>
        <ecNumber evidence="1">3.5.4.2</ecNumber>
    </recommendedName>
    <alternativeName>
        <fullName evidence="1">Adenine aminohydrolase</fullName>
        <shortName evidence="1">AAH</shortName>
    </alternativeName>
</protein>
<sequence>MCQSPLHDFLHGLPKCEHHVHLEGCVTPELIFQLAEKNNIQLPNPATHPAYASVEALRARYAEFTSLNDFLDFYFHGMSVLHHQSDFEELAWAYFQKAHADGVHHAEVFFDPQVHQARGIDYETVVSGFTAGCKRAERELGLSTRLILCFVRHLPVDSATKLYELALASNHFESRVVHGLGWSSSEVGPPKDMFREIYASASGKGIRLTAHAGEEGDPTYISTALELGARRIDHGIRLVEDPELMERVAREGIMLTVCPLSNVRLRCVQSVEQVPIRKFLDAGVKFSINSDDPAYFGGYILDNYCAVQEAFQLSILEWRVIAENSVNESWIDEARKAELLKRIDDHVQKHTVVA</sequence>
<organism>
    <name type="scientific">Aspergillus fumigatus (strain ATCC MYA-4609 / CBS 101355 / FGSC A1100 / Af293)</name>
    <name type="common">Neosartorya fumigata</name>
    <dbReference type="NCBI Taxonomy" id="330879"/>
    <lineage>
        <taxon>Eukaryota</taxon>
        <taxon>Fungi</taxon>
        <taxon>Dikarya</taxon>
        <taxon>Ascomycota</taxon>
        <taxon>Pezizomycotina</taxon>
        <taxon>Eurotiomycetes</taxon>
        <taxon>Eurotiomycetidae</taxon>
        <taxon>Eurotiales</taxon>
        <taxon>Aspergillaceae</taxon>
        <taxon>Aspergillus</taxon>
        <taxon>Aspergillus subgen. Fumigati</taxon>
    </lineage>
</organism>
<name>ADE_ASPFU</name>
<evidence type="ECO:0000255" key="1">
    <source>
        <dbReference type="HAMAP-Rule" id="MF_03145"/>
    </source>
</evidence>